<gene>
    <name evidence="1" type="primary">mecA</name>
    <name type="ordered locus">SGO_1724</name>
</gene>
<accession>A8AYY6</accession>
<comment type="function">
    <text evidence="1">Enables the recognition and targeting of unfolded and aggregated proteins to the ClpC protease or to other proteins involved in proteolysis.</text>
</comment>
<comment type="subunit">
    <text evidence="1">Homodimer.</text>
</comment>
<comment type="domain">
    <text>The N-terminal domain probably binds unfolded/aggregated proteins; the C-terminal domain interacts with ClpC.</text>
</comment>
<comment type="similarity">
    <text evidence="1">Belongs to the MecA family.</text>
</comment>
<dbReference type="EMBL" id="CP000725">
    <property type="protein sequence ID" value="ABV09150.1"/>
    <property type="molecule type" value="Genomic_DNA"/>
</dbReference>
<dbReference type="RefSeq" id="WP_012130768.1">
    <property type="nucleotide sequence ID" value="NC_009785.1"/>
</dbReference>
<dbReference type="SMR" id="A8AYY6"/>
<dbReference type="STRING" id="467705.SGO_1724"/>
<dbReference type="KEGG" id="sgo:SGO_1724"/>
<dbReference type="eggNOG" id="COG4862">
    <property type="taxonomic scope" value="Bacteria"/>
</dbReference>
<dbReference type="HOGENOM" id="CLU_071496_1_0_9"/>
<dbReference type="Proteomes" id="UP000001131">
    <property type="component" value="Chromosome"/>
</dbReference>
<dbReference type="GO" id="GO:0030674">
    <property type="term" value="F:protein-macromolecule adaptor activity"/>
    <property type="evidence" value="ECO:0007669"/>
    <property type="project" value="UniProtKB-UniRule"/>
</dbReference>
<dbReference type="Gene3D" id="3.30.70.1950">
    <property type="match status" value="1"/>
</dbReference>
<dbReference type="HAMAP" id="MF_01124">
    <property type="entry name" value="MecA"/>
    <property type="match status" value="1"/>
</dbReference>
<dbReference type="InterPro" id="IPR038471">
    <property type="entry name" value="MecA_C_sf"/>
</dbReference>
<dbReference type="InterPro" id="IPR008681">
    <property type="entry name" value="Neg-reg_MecA"/>
</dbReference>
<dbReference type="NCBIfam" id="NF002643">
    <property type="entry name" value="PRK02315.1-4"/>
    <property type="match status" value="1"/>
</dbReference>
<dbReference type="PANTHER" id="PTHR39161">
    <property type="entry name" value="ADAPTER PROTEIN MECA"/>
    <property type="match status" value="1"/>
</dbReference>
<dbReference type="PANTHER" id="PTHR39161:SF1">
    <property type="entry name" value="ADAPTER PROTEIN MECA 1"/>
    <property type="match status" value="1"/>
</dbReference>
<dbReference type="Pfam" id="PF05389">
    <property type="entry name" value="MecA"/>
    <property type="match status" value="1"/>
</dbReference>
<dbReference type="PIRSF" id="PIRSF029008">
    <property type="entry name" value="MecA"/>
    <property type="match status" value="1"/>
</dbReference>
<organism>
    <name type="scientific">Streptococcus gordonii (strain Challis / ATCC 35105 / BCRC 15272 / CH1 / DL1 / V288)</name>
    <dbReference type="NCBI Taxonomy" id="467705"/>
    <lineage>
        <taxon>Bacteria</taxon>
        <taxon>Bacillati</taxon>
        <taxon>Bacillota</taxon>
        <taxon>Bacilli</taxon>
        <taxon>Lactobacillales</taxon>
        <taxon>Streptococcaceae</taxon>
        <taxon>Streptococcus</taxon>
    </lineage>
</organism>
<protein>
    <recommendedName>
        <fullName evidence="1">Adapter protein MecA</fullName>
    </recommendedName>
</protein>
<sequence length="242" mass="28310">MEVKQISESTIKITIKLEDLEEHGMEMADFLVPQEKTEEFFYTILDELEMPESFLDSGMLSFRVTPKPDKLDVFVTKSKVDKNLNFEDLADLPDMDELSQMTPDEFLKTLEKNIFEKSRDDIDAVQMLEKAEEEDTSEPEEGQEQDRYIYYILRFSDLKNLIAFTKTVDYPVDTSELYKMDQRYYLTILVDIEGRPSRYPAWLLAAMREHAEDTDTTRALLQEHGHLLIVTDAVQHLQKVNC</sequence>
<feature type="chain" id="PRO_1000085012" description="Adapter protein MecA">
    <location>
        <begin position="1"/>
        <end position="242"/>
    </location>
</feature>
<evidence type="ECO:0000255" key="1">
    <source>
        <dbReference type="HAMAP-Rule" id="MF_01124"/>
    </source>
</evidence>
<name>MECA_STRGC</name>
<proteinExistence type="inferred from homology"/>
<reference key="1">
    <citation type="journal article" date="2007" name="J. Bacteriol.">
        <title>Genome-wide transcriptional changes in Streptococcus gordonii in response to competence signaling peptide.</title>
        <authorList>
            <person name="Vickerman M.M."/>
            <person name="Iobst S."/>
            <person name="Jesionowski A.M."/>
            <person name="Gill S.R."/>
        </authorList>
    </citation>
    <scope>NUCLEOTIDE SEQUENCE [LARGE SCALE GENOMIC DNA]</scope>
    <source>
        <strain>Challis / ATCC 35105 / BCRC 15272 / CH1 / DL1 / V288</strain>
    </source>
</reference>
<keyword id="KW-1185">Reference proteome</keyword>